<comment type="function">
    <text>Possible role could be the docking of the LHC I antenna complex to the core complex.</text>
</comment>
<comment type="subcellular location">
    <subcellularLocation>
        <location evidence="1">Plastid</location>
        <location evidence="1">Chloroplast thylakoid membrane</location>
        <topology evidence="1">Single-pass membrane protein</topology>
    </subcellularLocation>
</comment>
<comment type="similarity">
    <text evidence="3">Belongs to the psaH family.</text>
</comment>
<gene>
    <name type="primary">PSAH</name>
</gene>
<sequence>MASFATIAAVQPYSAVKGLGGSSLTGAKLFIKPSRQSFKPKSTRAGAVVAKYGDKSVYFDLEDLGNTTGQWDLYGSDAPSPYNPLQSKFFETFAAPFTKRGLLLKFLILGGGSLLTYVSASSTGDVLPIKRGPQEKPKLGPRGKL</sequence>
<keyword id="KW-0150">Chloroplast</keyword>
<keyword id="KW-0472">Membrane</keyword>
<keyword id="KW-0602">Photosynthesis</keyword>
<keyword id="KW-0603">Photosystem I</keyword>
<keyword id="KW-0934">Plastid</keyword>
<keyword id="KW-1185">Reference proteome</keyword>
<keyword id="KW-0793">Thylakoid</keyword>
<keyword id="KW-0809">Transit peptide</keyword>
<keyword id="KW-0812">Transmembrane</keyword>
<keyword id="KW-1133">Transmembrane helix</keyword>
<dbReference type="EMBL" id="U92504">
    <property type="protein sequence ID" value="AAB51159.1"/>
    <property type="molecule type" value="mRNA"/>
</dbReference>
<dbReference type="PIR" id="T14411">
    <property type="entry name" value="T14411"/>
</dbReference>
<dbReference type="SMR" id="O04006"/>
<dbReference type="EnsemblPlants" id="A06p02040.2_BraZ1">
    <property type="protein sequence ID" value="A06p02040.2_BraZ1.CDS"/>
    <property type="gene ID" value="A06g02040.2_BraZ1"/>
</dbReference>
<dbReference type="EnsemblPlants" id="Bra018955.1">
    <property type="protein sequence ID" value="Bra018955.1-P"/>
    <property type="gene ID" value="Bra018955"/>
</dbReference>
<dbReference type="GeneID" id="103871224"/>
<dbReference type="Gramene" id="A06p02040.2_BraZ1">
    <property type="protein sequence ID" value="A06p02040.2_BraZ1.CDS"/>
    <property type="gene ID" value="A06g02040.2_BraZ1"/>
</dbReference>
<dbReference type="Gramene" id="Bra018955.1">
    <property type="protein sequence ID" value="Bra018955.1-P"/>
    <property type="gene ID" value="Bra018955"/>
</dbReference>
<dbReference type="KEGG" id="brp:103871224"/>
<dbReference type="OMA" id="RNTTGQW"/>
<dbReference type="OrthoDB" id="496139at2759"/>
<dbReference type="Proteomes" id="UP000011750">
    <property type="component" value="Chromosome A06"/>
</dbReference>
<dbReference type="GO" id="GO:0009535">
    <property type="term" value="C:chloroplast thylakoid membrane"/>
    <property type="evidence" value="ECO:0007669"/>
    <property type="project" value="UniProtKB-SubCell"/>
</dbReference>
<dbReference type="GO" id="GO:0009538">
    <property type="term" value="C:photosystem I reaction center"/>
    <property type="evidence" value="ECO:0007669"/>
    <property type="project" value="InterPro"/>
</dbReference>
<dbReference type="GO" id="GO:0015979">
    <property type="term" value="P:photosynthesis"/>
    <property type="evidence" value="ECO:0007669"/>
    <property type="project" value="UniProtKB-KW"/>
</dbReference>
<dbReference type="FunFam" id="1.20.5.220:FF:000003">
    <property type="entry name" value="Photosystem I reaction center subunit VI"/>
    <property type="match status" value="1"/>
</dbReference>
<dbReference type="Gene3D" id="1.20.5.220">
    <property type="match status" value="1"/>
</dbReference>
<dbReference type="InterPro" id="IPR004928">
    <property type="entry name" value="PSI_PsaH"/>
</dbReference>
<dbReference type="PANTHER" id="PTHR34787:SF4">
    <property type="entry name" value="PHOTOSYSTEM I REACTION CENTER SUBUNIT VI, CHLOROPLASTIC"/>
    <property type="match status" value="1"/>
</dbReference>
<dbReference type="PANTHER" id="PTHR34787">
    <property type="entry name" value="PHOTOSYSTEM I REACTION CENTER SUBUNIT VI-2, CHLOROPLASTIC"/>
    <property type="match status" value="1"/>
</dbReference>
<dbReference type="Pfam" id="PF03244">
    <property type="entry name" value="PSI_PsaH"/>
    <property type="match status" value="1"/>
</dbReference>
<reference key="1">
    <citation type="submission" date="1997-03" db="EMBL/GenBank/DDBJ databases">
        <authorList>
            <person name="Son D."/>
            <person name="Jo J."/>
        </authorList>
    </citation>
    <scope>NUCLEOTIDE SEQUENCE [MRNA]</scope>
</reference>
<feature type="transit peptide" description="Chloroplast" evidence="1">
    <location>
        <begin position="1"/>
        <end position="50"/>
    </location>
</feature>
<feature type="chain" id="PRO_0000029414" description="Photosystem I reaction center subunit VI, chloroplastic">
    <location>
        <begin position="51"/>
        <end position="145"/>
    </location>
</feature>
<feature type="transmembrane region" description="Helical" evidence="2">
    <location>
        <begin position="102"/>
        <end position="122"/>
    </location>
</feature>
<name>PSAH_BRACM</name>
<proteinExistence type="evidence at transcript level"/>
<organism>
    <name type="scientific">Brassica campestris</name>
    <name type="common">Field mustard</name>
    <dbReference type="NCBI Taxonomy" id="3711"/>
    <lineage>
        <taxon>Eukaryota</taxon>
        <taxon>Viridiplantae</taxon>
        <taxon>Streptophyta</taxon>
        <taxon>Embryophyta</taxon>
        <taxon>Tracheophyta</taxon>
        <taxon>Spermatophyta</taxon>
        <taxon>Magnoliopsida</taxon>
        <taxon>eudicotyledons</taxon>
        <taxon>Gunneridae</taxon>
        <taxon>Pentapetalae</taxon>
        <taxon>rosids</taxon>
        <taxon>malvids</taxon>
        <taxon>Brassicales</taxon>
        <taxon>Brassicaceae</taxon>
        <taxon>Brassiceae</taxon>
        <taxon>Brassica</taxon>
    </lineage>
</organism>
<protein>
    <recommendedName>
        <fullName>Photosystem I reaction center subunit VI, chloroplastic</fullName>
        <shortName>PSI-H</shortName>
    </recommendedName>
    <alternativeName>
        <fullName>Light-harvesting complex I 11 kDa protein</fullName>
    </alternativeName>
</protein>
<evidence type="ECO:0000250" key="1"/>
<evidence type="ECO:0000255" key="2"/>
<evidence type="ECO:0000305" key="3"/>
<accession>O04006</accession>